<feature type="chain" id="PRO_0000337397" description="Elongation factor Tu 1">
    <location>
        <begin position="1"/>
        <end position="394"/>
    </location>
</feature>
<feature type="domain" description="tr-type G">
    <location>
        <begin position="10"/>
        <end position="204"/>
    </location>
</feature>
<feature type="region of interest" description="G1" evidence="1">
    <location>
        <begin position="19"/>
        <end position="26"/>
    </location>
</feature>
<feature type="region of interest" description="G2" evidence="1">
    <location>
        <begin position="60"/>
        <end position="64"/>
    </location>
</feature>
<feature type="region of interest" description="G3" evidence="1">
    <location>
        <begin position="81"/>
        <end position="84"/>
    </location>
</feature>
<feature type="region of interest" description="G4" evidence="1">
    <location>
        <begin position="136"/>
        <end position="139"/>
    </location>
</feature>
<feature type="region of interest" description="G5" evidence="1">
    <location>
        <begin position="174"/>
        <end position="176"/>
    </location>
</feature>
<feature type="binding site" evidence="2">
    <location>
        <begin position="19"/>
        <end position="26"/>
    </location>
    <ligand>
        <name>GTP</name>
        <dbReference type="ChEBI" id="CHEBI:37565"/>
    </ligand>
</feature>
<feature type="binding site" evidence="2">
    <location>
        <position position="26"/>
    </location>
    <ligand>
        <name>Mg(2+)</name>
        <dbReference type="ChEBI" id="CHEBI:18420"/>
    </ligand>
</feature>
<feature type="binding site" evidence="2">
    <location>
        <begin position="81"/>
        <end position="85"/>
    </location>
    <ligand>
        <name>GTP</name>
        <dbReference type="ChEBI" id="CHEBI:37565"/>
    </ligand>
</feature>
<feature type="binding site" evidence="2">
    <location>
        <begin position="136"/>
        <end position="139"/>
    </location>
    <ligand>
        <name>GTP</name>
        <dbReference type="ChEBI" id="CHEBI:37565"/>
    </ligand>
</feature>
<protein>
    <recommendedName>
        <fullName evidence="2">Elongation factor Tu 1</fullName>
        <shortName evidence="2">EF-Tu 1</shortName>
        <ecNumber evidence="2">3.6.5.3</ecNumber>
    </recommendedName>
</protein>
<proteinExistence type="inferred from homology"/>
<comment type="function">
    <text evidence="2">GTP hydrolase that promotes the GTP-dependent binding of aminoacyl-tRNA to the A-site of ribosomes during protein biosynthesis.</text>
</comment>
<comment type="catalytic activity">
    <reaction evidence="2">
        <text>GTP + H2O = GDP + phosphate + H(+)</text>
        <dbReference type="Rhea" id="RHEA:19669"/>
        <dbReference type="ChEBI" id="CHEBI:15377"/>
        <dbReference type="ChEBI" id="CHEBI:15378"/>
        <dbReference type="ChEBI" id="CHEBI:37565"/>
        <dbReference type="ChEBI" id="CHEBI:43474"/>
        <dbReference type="ChEBI" id="CHEBI:58189"/>
        <dbReference type="EC" id="3.6.5.3"/>
    </reaction>
    <physiologicalReaction direction="left-to-right" evidence="2">
        <dbReference type="Rhea" id="RHEA:19670"/>
    </physiologicalReaction>
</comment>
<comment type="subunit">
    <text evidence="2">Monomer.</text>
</comment>
<comment type="subcellular location">
    <subcellularLocation>
        <location evidence="2">Cytoplasm</location>
    </subcellularLocation>
</comment>
<comment type="similarity">
    <text evidence="2">Belongs to the TRAFAC class translation factor GTPase superfamily. Classic translation factor GTPase family. EF-Tu/EF-1A subfamily.</text>
</comment>
<organism>
    <name type="scientific">Haemophilus influenzae (strain 86-028NP)</name>
    <dbReference type="NCBI Taxonomy" id="281310"/>
    <lineage>
        <taxon>Bacteria</taxon>
        <taxon>Pseudomonadati</taxon>
        <taxon>Pseudomonadota</taxon>
        <taxon>Gammaproteobacteria</taxon>
        <taxon>Pasteurellales</taxon>
        <taxon>Pasteurellaceae</taxon>
        <taxon>Haemophilus</taxon>
    </lineage>
</organism>
<keyword id="KW-0963">Cytoplasm</keyword>
<keyword id="KW-0251">Elongation factor</keyword>
<keyword id="KW-0342">GTP-binding</keyword>
<keyword id="KW-0378">Hydrolase</keyword>
<keyword id="KW-0460">Magnesium</keyword>
<keyword id="KW-0479">Metal-binding</keyword>
<keyword id="KW-0547">Nucleotide-binding</keyword>
<keyword id="KW-0648">Protein biosynthesis</keyword>
<reference key="1">
    <citation type="journal article" date="2005" name="J. Bacteriol.">
        <title>Genomic sequence of an otitis media isolate of nontypeable Haemophilus influenzae: comparative study with H. influenzae serotype d, strain KW20.</title>
        <authorList>
            <person name="Harrison A."/>
            <person name="Dyer D.W."/>
            <person name="Gillaspy A."/>
            <person name="Ray W.C."/>
            <person name="Mungur R."/>
            <person name="Carson M.B."/>
            <person name="Zhong H."/>
            <person name="Gipson J."/>
            <person name="Gipson M."/>
            <person name="Johnson L.S."/>
            <person name="Lewis L."/>
            <person name="Bakaletz L.O."/>
            <person name="Munson R.S. Jr."/>
        </authorList>
    </citation>
    <scope>NUCLEOTIDE SEQUENCE [LARGE SCALE GENOMIC DNA]</scope>
    <source>
        <strain>86-028NP</strain>
    </source>
</reference>
<accession>Q4QMW6</accession>
<name>EFTU1_HAEI8</name>
<evidence type="ECO:0000250" key="1"/>
<evidence type="ECO:0000255" key="2">
    <source>
        <dbReference type="HAMAP-Rule" id="MF_00118"/>
    </source>
</evidence>
<dbReference type="EC" id="3.6.5.3" evidence="2"/>
<dbReference type="EMBL" id="CP000057">
    <property type="protein sequence ID" value="AAX87631.1"/>
    <property type="molecule type" value="Genomic_DNA"/>
</dbReference>
<dbReference type="SMR" id="Q4QMW6"/>
<dbReference type="KEGG" id="hit:NTHI0712"/>
<dbReference type="HOGENOM" id="CLU_007265_0_2_6"/>
<dbReference type="Proteomes" id="UP000002525">
    <property type="component" value="Chromosome"/>
</dbReference>
<dbReference type="GO" id="GO:0005829">
    <property type="term" value="C:cytosol"/>
    <property type="evidence" value="ECO:0007669"/>
    <property type="project" value="TreeGrafter"/>
</dbReference>
<dbReference type="GO" id="GO:0005525">
    <property type="term" value="F:GTP binding"/>
    <property type="evidence" value="ECO:0007669"/>
    <property type="project" value="UniProtKB-UniRule"/>
</dbReference>
<dbReference type="GO" id="GO:0003924">
    <property type="term" value="F:GTPase activity"/>
    <property type="evidence" value="ECO:0007669"/>
    <property type="project" value="InterPro"/>
</dbReference>
<dbReference type="GO" id="GO:0097216">
    <property type="term" value="F:guanosine tetraphosphate binding"/>
    <property type="evidence" value="ECO:0007669"/>
    <property type="project" value="UniProtKB-ARBA"/>
</dbReference>
<dbReference type="GO" id="GO:0003746">
    <property type="term" value="F:translation elongation factor activity"/>
    <property type="evidence" value="ECO:0007669"/>
    <property type="project" value="UniProtKB-UniRule"/>
</dbReference>
<dbReference type="CDD" id="cd01884">
    <property type="entry name" value="EF_Tu"/>
    <property type="match status" value="1"/>
</dbReference>
<dbReference type="CDD" id="cd03697">
    <property type="entry name" value="EFTU_II"/>
    <property type="match status" value="1"/>
</dbReference>
<dbReference type="CDD" id="cd03707">
    <property type="entry name" value="EFTU_III"/>
    <property type="match status" value="1"/>
</dbReference>
<dbReference type="FunFam" id="2.40.30.10:FF:000001">
    <property type="entry name" value="Elongation factor Tu"/>
    <property type="match status" value="1"/>
</dbReference>
<dbReference type="FunFam" id="3.40.50.300:FF:000003">
    <property type="entry name" value="Elongation factor Tu"/>
    <property type="match status" value="1"/>
</dbReference>
<dbReference type="Gene3D" id="3.40.50.300">
    <property type="entry name" value="P-loop containing nucleotide triphosphate hydrolases"/>
    <property type="match status" value="1"/>
</dbReference>
<dbReference type="Gene3D" id="2.40.30.10">
    <property type="entry name" value="Translation factors"/>
    <property type="match status" value="2"/>
</dbReference>
<dbReference type="HAMAP" id="MF_00118_B">
    <property type="entry name" value="EF_Tu_B"/>
    <property type="match status" value="1"/>
</dbReference>
<dbReference type="InterPro" id="IPR041709">
    <property type="entry name" value="EF-Tu_GTP-bd"/>
</dbReference>
<dbReference type="InterPro" id="IPR050055">
    <property type="entry name" value="EF-Tu_GTPase"/>
</dbReference>
<dbReference type="InterPro" id="IPR004161">
    <property type="entry name" value="EFTu-like_2"/>
</dbReference>
<dbReference type="InterPro" id="IPR033720">
    <property type="entry name" value="EFTU_2"/>
</dbReference>
<dbReference type="InterPro" id="IPR031157">
    <property type="entry name" value="G_TR_CS"/>
</dbReference>
<dbReference type="InterPro" id="IPR027417">
    <property type="entry name" value="P-loop_NTPase"/>
</dbReference>
<dbReference type="InterPro" id="IPR005225">
    <property type="entry name" value="Small_GTP-bd"/>
</dbReference>
<dbReference type="InterPro" id="IPR000795">
    <property type="entry name" value="T_Tr_GTP-bd_dom"/>
</dbReference>
<dbReference type="InterPro" id="IPR009000">
    <property type="entry name" value="Transl_B-barrel_sf"/>
</dbReference>
<dbReference type="InterPro" id="IPR009001">
    <property type="entry name" value="Transl_elong_EF1A/Init_IF2_C"/>
</dbReference>
<dbReference type="InterPro" id="IPR004541">
    <property type="entry name" value="Transl_elong_EFTu/EF1A_bac/org"/>
</dbReference>
<dbReference type="InterPro" id="IPR004160">
    <property type="entry name" value="Transl_elong_EFTu/EF1A_C"/>
</dbReference>
<dbReference type="NCBIfam" id="TIGR00485">
    <property type="entry name" value="EF-Tu"/>
    <property type="match status" value="1"/>
</dbReference>
<dbReference type="NCBIfam" id="NF000766">
    <property type="entry name" value="PRK00049.1"/>
    <property type="match status" value="1"/>
</dbReference>
<dbReference type="NCBIfam" id="NF009372">
    <property type="entry name" value="PRK12735.1"/>
    <property type="match status" value="1"/>
</dbReference>
<dbReference type="NCBIfam" id="NF009373">
    <property type="entry name" value="PRK12736.1"/>
    <property type="match status" value="1"/>
</dbReference>
<dbReference type="NCBIfam" id="TIGR00231">
    <property type="entry name" value="small_GTP"/>
    <property type="match status" value="1"/>
</dbReference>
<dbReference type="PANTHER" id="PTHR43721:SF22">
    <property type="entry name" value="ELONGATION FACTOR TU, MITOCHONDRIAL"/>
    <property type="match status" value="1"/>
</dbReference>
<dbReference type="PANTHER" id="PTHR43721">
    <property type="entry name" value="ELONGATION FACTOR TU-RELATED"/>
    <property type="match status" value="1"/>
</dbReference>
<dbReference type="Pfam" id="PF00009">
    <property type="entry name" value="GTP_EFTU"/>
    <property type="match status" value="1"/>
</dbReference>
<dbReference type="Pfam" id="PF03144">
    <property type="entry name" value="GTP_EFTU_D2"/>
    <property type="match status" value="1"/>
</dbReference>
<dbReference type="Pfam" id="PF03143">
    <property type="entry name" value="GTP_EFTU_D3"/>
    <property type="match status" value="1"/>
</dbReference>
<dbReference type="PRINTS" id="PR00315">
    <property type="entry name" value="ELONGATNFCT"/>
</dbReference>
<dbReference type="SUPFAM" id="SSF50465">
    <property type="entry name" value="EF-Tu/eEF-1alpha/eIF2-gamma C-terminal domain"/>
    <property type="match status" value="1"/>
</dbReference>
<dbReference type="SUPFAM" id="SSF52540">
    <property type="entry name" value="P-loop containing nucleoside triphosphate hydrolases"/>
    <property type="match status" value="1"/>
</dbReference>
<dbReference type="SUPFAM" id="SSF50447">
    <property type="entry name" value="Translation proteins"/>
    <property type="match status" value="1"/>
</dbReference>
<dbReference type="PROSITE" id="PS00301">
    <property type="entry name" value="G_TR_1"/>
    <property type="match status" value="1"/>
</dbReference>
<dbReference type="PROSITE" id="PS51722">
    <property type="entry name" value="G_TR_2"/>
    <property type="match status" value="1"/>
</dbReference>
<sequence length="394" mass="43297">MSKEKFERTKPHVNVGTIGHVDHGKTTLTAAITTVLAKHYGGAARAFDQIDNAPEEKARGITINTSHVEYDTPTRHYAHVDCPGHADYVKNMITGAAQMDGAILVVAATDGPMPQTREHILLGRQVGVPYIIVFLNKCDMVDDEELLELVEMEVRELLSQYDFPGDDTPIVRGSALQALNGVAEWEEKILELAGHLDTYIPEPERAIDQPFLLPIEDVFSISGRGTVVTGRVERGIIRTGDEVEIVGIKDTAKTTVTGVEMFRKLLDEGRAGENIGALLRGTKREEIERGQVLAKPGSITPHTDFESEVYVLSKDEGGRHTPFFKGYRPQFYFRTTDVTGTIELPEGVEMVMPGDNIKMTVSLIHPIAMDQGLRFAIREGGRTVGAGVVAKIIK</sequence>
<gene>
    <name evidence="2" type="primary">tuf1</name>
    <name type="synonym">tufB</name>
    <name type="ordered locus">NTHI0712</name>
</gene>